<sequence length="610" mass="68377">MPPVSASKAKRDAKKAEREAKKAAAGKTIRKLGRKKEAAAEESEVDAAAREIKMMKLQQDKDGLSDRVVTGVLSSLETSRDIKLSSVSLLFHGKVLIQDSGLELNYGRRYGLLGENGCGKSTFLKALATREYPIPEHIDIYLLDEPAEPSELSALDYVVTEAQHELKRIEDLVEKTILEDGPESELLEPLYERMDSLDPDTFESRAAIILIGLGFNKKTILKKTKDMSGGWKMRVALAKALFVKPTLLLLDDPTAHLDLEACVWLEEYLKRFDRTLVLVSHSQDFLNGVCTNMIDMRAQKLTAYGGNYDSYHKTRSELETNQMKQYNKQQEEIQHIKKFIASAGTYANLVKQAKSRQKILDKMEADGLVQPVVPDKVFSFRFPQVERLPPPVLAFDDISFHYESNPSENLYEHLNFGVDMDSRIALVGPNGVGKSTLLKIMTGELTPQSGRVSRHTHVKLGVYSQHSQDQLDLTKSALEFVRDKYSNISQDFQFWRGQLGRYGLTGEGQTVQMATLSEGQRSRVVFALLALEQPNVLLLDEPTNGLDIPTIDSLADAINEFNGGVVVVSHDFRLLDKIAQDIFVVENKTATRWDGSILQYKNKLAKNVVL</sequence>
<gene>
    <name type="primary">ARB1</name>
    <name type="ordered locus">YER036C</name>
</gene>
<keyword id="KW-0002">3D-structure</keyword>
<keyword id="KW-0067">ATP-binding</keyword>
<keyword id="KW-0963">Cytoplasm</keyword>
<keyword id="KW-0378">Hydrolase</keyword>
<keyword id="KW-0547">Nucleotide-binding</keyword>
<keyword id="KW-0539">Nucleus</keyword>
<keyword id="KW-0597">Phosphoprotein</keyword>
<keyword id="KW-1185">Reference proteome</keyword>
<keyword id="KW-0677">Repeat</keyword>
<comment type="function">
    <text evidence="4 5">ATPase that stimulates 40S and 60S ribosome biogenesis (PubMed:16260602). Also involved in ribosome-associated quality control (RQC) pathway, a pathway that mediates ubiquitination and extraction of incompletely synthesized nascent chains for proteasomal degradation: localizes to the ribosomal E-site and stimulates VMS1-dependent tRNA cleavage (PubMed:31189955).</text>
</comment>
<comment type="catalytic activity">
    <reaction evidence="4 7">
        <text>ATP + H2O = ADP + phosphate + H(+)</text>
        <dbReference type="Rhea" id="RHEA:13065"/>
        <dbReference type="ChEBI" id="CHEBI:15377"/>
        <dbReference type="ChEBI" id="CHEBI:15378"/>
        <dbReference type="ChEBI" id="CHEBI:30616"/>
        <dbReference type="ChEBI" id="CHEBI:43474"/>
        <dbReference type="ChEBI" id="CHEBI:456216"/>
    </reaction>
    <physiologicalReaction direction="left-to-right" evidence="4 7">
        <dbReference type="Rhea" id="RHEA:13066"/>
    </physiologicalReaction>
</comment>
<comment type="subunit">
    <text evidence="4">Interacts with LSG1.</text>
</comment>
<comment type="subcellular location">
    <subcellularLocation>
        <location evidence="4">Cytoplasm</location>
    </subcellularLocation>
    <subcellularLocation>
        <location evidence="4">Nucleus</location>
    </subcellularLocation>
    <text evidence="4">Shuttles between the cytoplasm and the nucleus.</text>
</comment>
<comment type="miscellaneous">
    <text evidence="3">Present with 17600 molecules/cell in log phase SD medium.</text>
</comment>
<comment type="similarity">
    <text evidence="6">Belongs to the ABC transporter superfamily. ABCF family. EF3 subfamily.</text>
</comment>
<accession>P40024</accession>
<accession>D3DLT5</accession>
<feature type="chain" id="PRO_0000093463" description="ABC transporter ATP-binding protein ARB1">
    <location>
        <begin position="1"/>
        <end position="610"/>
    </location>
</feature>
<feature type="domain" description="ABC transporter 1" evidence="1">
    <location>
        <begin position="82"/>
        <end position="323"/>
    </location>
</feature>
<feature type="domain" description="ABC transporter 2" evidence="1">
    <location>
        <begin position="393"/>
        <end position="610"/>
    </location>
</feature>
<feature type="region of interest" description="Disordered" evidence="2">
    <location>
        <begin position="1"/>
        <end position="43"/>
    </location>
</feature>
<feature type="binding site" evidence="1">
    <location>
        <begin position="114"/>
        <end position="121"/>
    </location>
    <ligand>
        <name>ATP</name>
        <dbReference type="ChEBI" id="CHEBI:30616"/>
        <label>1</label>
    </ligand>
</feature>
<feature type="binding site" evidence="1">
    <location>
        <begin position="428"/>
        <end position="435"/>
    </location>
    <ligand>
        <name>ATP</name>
        <dbReference type="ChEBI" id="CHEBI:30616"/>
        <label>2</label>
    </ligand>
</feature>
<feature type="modified residue" description="Phosphoserine" evidence="9">
    <location>
        <position position="43"/>
    </location>
</feature>
<feature type="modified residue" description="Phosphoserine" evidence="9">
    <location>
        <position position="65"/>
    </location>
</feature>
<feature type="modified residue" description="Phosphoserine" evidence="9">
    <location>
        <position position="196"/>
    </location>
</feature>
<feature type="modified residue" description="Phosphothreonine" evidence="9">
    <location>
        <position position="446"/>
    </location>
</feature>
<feature type="mutagenesis site" description="Abolished ATPase activity, leading to impaired ability to stimulate VMS1 activity; when associated with D-519." evidence="5">
    <original>GG</original>
    <variation>DE</variation>
    <location>
        <begin position="229"/>
        <end position="230"/>
    </location>
</feature>
<feature type="mutagenesis site" description="Abolished ATPase activity, leading to impaired ability to stimulate VMS1 activity." evidence="5">
    <original>Y</original>
    <variation>A</variation>
    <location>
        <position position="346"/>
    </location>
</feature>
<feature type="mutagenesis site" description="Abolished ATPase activity, leading to impaired ability to stimulate VMS1 activity; when associated with 229-D-E-230." evidence="5">
    <original>G</original>
    <variation>D</variation>
    <location>
        <position position="519"/>
    </location>
</feature>
<reference key="1">
    <citation type="journal article" date="1997" name="Nature">
        <title>The nucleotide sequence of Saccharomyces cerevisiae chromosome V.</title>
        <authorList>
            <person name="Dietrich F.S."/>
            <person name="Mulligan J.T."/>
            <person name="Hennessy K.M."/>
            <person name="Yelton M.A."/>
            <person name="Allen E."/>
            <person name="Araujo R."/>
            <person name="Aviles E."/>
            <person name="Berno A."/>
            <person name="Brennan T."/>
            <person name="Carpenter J."/>
            <person name="Chen E."/>
            <person name="Cherry J.M."/>
            <person name="Chung E."/>
            <person name="Duncan M."/>
            <person name="Guzman E."/>
            <person name="Hartzell G."/>
            <person name="Hunicke-Smith S."/>
            <person name="Hyman R.W."/>
            <person name="Kayser A."/>
            <person name="Komp C."/>
            <person name="Lashkari D."/>
            <person name="Lew H."/>
            <person name="Lin D."/>
            <person name="Mosedale D."/>
            <person name="Nakahara K."/>
            <person name="Namath A."/>
            <person name="Norgren R."/>
            <person name="Oefner P."/>
            <person name="Oh C."/>
            <person name="Petel F.X."/>
            <person name="Roberts D."/>
            <person name="Sehl P."/>
            <person name="Schramm S."/>
            <person name="Shogren T."/>
            <person name="Smith V."/>
            <person name="Taylor P."/>
            <person name="Wei Y."/>
            <person name="Botstein D."/>
            <person name="Davis R.W."/>
        </authorList>
    </citation>
    <scope>NUCLEOTIDE SEQUENCE [LARGE SCALE GENOMIC DNA]</scope>
    <source>
        <strain>ATCC 204508 / S288c</strain>
    </source>
</reference>
<reference key="2">
    <citation type="journal article" date="2014" name="G3 (Bethesda)">
        <title>The reference genome sequence of Saccharomyces cerevisiae: Then and now.</title>
        <authorList>
            <person name="Engel S.R."/>
            <person name="Dietrich F.S."/>
            <person name="Fisk D.G."/>
            <person name="Binkley G."/>
            <person name="Balakrishnan R."/>
            <person name="Costanzo M.C."/>
            <person name="Dwight S.S."/>
            <person name="Hitz B.C."/>
            <person name="Karra K."/>
            <person name="Nash R.S."/>
            <person name="Weng S."/>
            <person name="Wong E.D."/>
            <person name="Lloyd P."/>
            <person name="Skrzypek M.S."/>
            <person name="Miyasato S.R."/>
            <person name="Simison M."/>
            <person name="Cherry J.M."/>
        </authorList>
    </citation>
    <scope>GENOME REANNOTATION</scope>
    <source>
        <strain>ATCC 204508 / S288c</strain>
    </source>
</reference>
<reference key="3">
    <citation type="journal article" date="2003" name="Nature">
        <title>Global analysis of protein expression in yeast.</title>
        <authorList>
            <person name="Ghaemmaghami S."/>
            <person name="Huh W.-K."/>
            <person name="Bower K."/>
            <person name="Howson R.W."/>
            <person name="Belle A."/>
            <person name="Dephoure N."/>
            <person name="O'Shea E.K."/>
            <person name="Weissman J.S."/>
        </authorList>
    </citation>
    <scope>LEVEL OF PROTEIN EXPRESSION [LARGE SCALE ANALYSIS]</scope>
</reference>
<reference key="4">
    <citation type="journal article" date="2005" name="Mol. Cell. Biol.">
        <title>The novel ATP-binding cassette protein ARB1 is a shuttling factor that stimulates 40S and 60S ribosome biogenesis.</title>
        <authorList>
            <person name="Dong J."/>
            <person name="Lai R."/>
            <person name="Jennings J.L."/>
            <person name="Link A.J."/>
            <person name="Hinnebusch A.G."/>
        </authorList>
    </citation>
    <scope>FUNCTION</scope>
    <scope>CATALYTIC ACTIVITY</scope>
    <scope>SUBCELLULAR LOCATION</scope>
    <scope>INTERACTION WITH LSG1</scope>
</reference>
<reference key="5">
    <citation type="journal article" date="2008" name="Mol. Cell. Proteomics">
        <title>A multidimensional chromatography technology for in-depth phosphoproteome analysis.</title>
        <authorList>
            <person name="Albuquerque C.P."/>
            <person name="Smolka M.B."/>
            <person name="Payne S.H."/>
            <person name="Bafna V."/>
            <person name="Eng J."/>
            <person name="Zhou H."/>
        </authorList>
    </citation>
    <scope>PHOSPHORYLATION [LARGE SCALE ANALYSIS] AT SER-43; SER-65; SER-196 AND THR-446</scope>
    <scope>IDENTIFICATION BY MASS SPECTROMETRY [LARGE SCALE ANALYSIS]</scope>
</reference>
<reference key="6">
    <citation type="journal article" date="2012" name="Proc. Natl. Acad. Sci. U.S.A.">
        <title>N-terminal acetylome analyses and functional insights of the N-terminal acetyltransferase NatB.</title>
        <authorList>
            <person name="Van Damme P."/>
            <person name="Lasa M."/>
            <person name="Polevoda B."/>
            <person name="Gazquez C."/>
            <person name="Elosegui-Artola A."/>
            <person name="Kim D.S."/>
            <person name="De Juan-Pardo E."/>
            <person name="Demeyer K."/>
            <person name="Hole K."/>
            <person name="Larrea E."/>
            <person name="Timmerman E."/>
            <person name="Prieto J."/>
            <person name="Arnesen T."/>
            <person name="Sherman F."/>
            <person name="Gevaert K."/>
            <person name="Aldabe R."/>
        </authorList>
    </citation>
    <scope>IDENTIFICATION BY MASS SPECTROMETRY [LARGE SCALE ANALYSIS]</scope>
</reference>
<reference evidence="8" key="7">
    <citation type="journal article" date="2019" name="Nature">
        <title>Structure and function of Vms1 and Arb1 in RQC and mitochondrial proteome homeostasis.</title>
        <authorList>
            <person name="Su T."/>
            <person name="Izawa T."/>
            <person name="Thoms M."/>
            <person name="Yamashita Y."/>
            <person name="Cheng J."/>
            <person name="Berninghausen O."/>
            <person name="Hartl F.U."/>
            <person name="Inada T."/>
            <person name="Neupert W."/>
            <person name="Beckmann R."/>
        </authorList>
    </citation>
    <scope>STRUCTURE BY ELECTRON MICROSCOPY (3.60 ANGSTROMS) OF 85-603 IN COMPLEX WITH 60S RIBOSOME AND VMS1</scope>
    <scope>FUNCTION</scope>
    <scope>MUTAGENESIS OF 229-GLY-GLY-230; TYR-346 AND GLY-519</scope>
</reference>
<name>ARB1_YEAST</name>
<evidence type="ECO:0000255" key="1">
    <source>
        <dbReference type="PROSITE-ProRule" id="PRU00434"/>
    </source>
</evidence>
<evidence type="ECO:0000256" key="2">
    <source>
        <dbReference type="SAM" id="MobiDB-lite"/>
    </source>
</evidence>
<evidence type="ECO:0000269" key="3">
    <source>
    </source>
</evidence>
<evidence type="ECO:0000269" key="4">
    <source>
    </source>
</evidence>
<evidence type="ECO:0000269" key="5">
    <source>
    </source>
</evidence>
<evidence type="ECO:0000305" key="6"/>
<evidence type="ECO:0000305" key="7">
    <source>
    </source>
</evidence>
<evidence type="ECO:0007744" key="8">
    <source>
        <dbReference type="PDB" id="6R84"/>
    </source>
</evidence>
<evidence type="ECO:0007744" key="9">
    <source>
    </source>
</evidence>
<organism>
    <name type="scientific">Saccharomyces cerevisiae (strain ATCC 204508 / S288c)</name>
    <name type="common">Baker's yeast</name>
    <dbReference type="NCBI Taxonomy" id="559292"/>
    <lineage>
        <taxon>Eukaryota</taxon>
        <taxon>Fungi</taxon>
        <taxon>Dikarya</taxon>
        <taxon>Ascomycota</taxon>
        <taxon>Saccharomycotina</taxon>
        <taxon>Saccharomycetes</taxon>
        <taxon>Saccharomycetales</taxon>
        <taxon>Saccharomycetaceae</taxon>
        <taxon>Saccharomyces</taxon>
    </lineage>
</organism>
<protein>
    <recommendedName>
        <fullName>ABC transporter ATP-binding protein ARB1</fullName>
        <ecNumber evidence="4 7">3.6.5.-</ecNumber>
    </recommendedName>
    <alternativeName>
        <fullName>ATP-binding cassette protein involved in ribosome biogenesis 1</fullName>
    </alternativeName>
</protein>
<dbReference type="EC" id="3.6.5.-" evidence="4 7"/>
<dbReference type="EMBL" id="U18796">
    <property type="protein sequence ID" value="AAB64571.1"/>
    <property type="molecule type" value="Genomic_DNA"/>
</dbReference>
<dbReference type="EMBL" id="BK006939">
    <property type="protein sequence ID" value="DAA07689.1"/>
    <property type="molecule type" value="Genomic_DNA"/>
</dbReference>
<dbReference type="PIR" id="S50539">
    <property type="entry name" value="S50539"/>
</dbReference>
<dbReference type="RefSeq" id="NP_010953.1">
    <property type="nucleotide sequence ID" value="NM_001178927.1"/>
</dbReference>
<dbReference type="PDB" id="6R84">
    <property type="method" value="EM"/>
    <property type="resolution" value="3.60 A"/>
    <property type="chains" value="A=85-603"/>
</dbReference>
<dbReference type="PDBsum" id="6R84"/>
<dbReference type="EMDB" id="EMD-4751"/>
<dbReference type="SMR" id="P40024"/>
<dbReference type="BioGRID" id="36771">
    <property type="interactions" value="141"/>
</dbReference>
<dbReference type="DIP" id="DIP-4341N"/>
<dbReference type="FunCoup" id="P40024">
    <property type="interactions" value="1260"/>
</dbReference>
<dbReference type="IntAct" id="P40024">
    <property type="interactions" value="39"/>
</dbReference>
<dbReference type="MINT" id="P40024"/>
<dbReference type="STRING" id="4932.YER036C"/>
<dbReference type="iPTMnet" id="P40024"/>
<dbReference type="PaxDb" id="4932-YER036C"/>
<dbReference type="PeptideAtlas" id="P40024"/>
<dbReference type="EnsemblFungi" id="YER036C_mRNA">
    <property type="protein sequence ID" value="YER036C"/>
    <property type="gene ID" value="YER036C"/>
</dbReference>
<dbReference type="GeneID" id="856758"/>
<dbReference type="KEGG" id="sce:YER036C"/>
<dbReference type="AGR" id="SGD:S000000838"/>
<dbReference type="SGD" id="S000000838">
    <property type="gene designation" value="ARB1"/>
</dbReference>
<dbReference type="VEuPathDB" id="FungiDB:YER036C"/>
<dbReference type="eggNOG" id="KOG0927">
    <property type="taxonomic scope" value="Eukaryota"/>
</dbReference>
<dbReference type="GeneTree" id="ENSGT00630000089910"/>
<dbReference type="HOGENOM" id="CLU_000604_36_6_1"/>
<dbReference type="InParanoid" id="P40024"/>
<dbReference type="OMA" id="QYEGTML"/>
<dbReference type="OrthoDB" id="2110130at2759"/>
<dbReference type="BioCyc" id="YEAST:G3O-30217-MONOMER"/>
<dbReference type="BioGRID-ORCS" id="856758">
    <property type="hits" value="0 hits in 10 CRISPR screens"/>
</dbReference>
<dbReference type="CD-CODE" id="E03F929F">
    <property type="entry name" value="Stress granule"/>
</dbReference>
<dbReference type="PRO" id="PR:P40024"/>
<dbReference type="Proteomes" id="UP000002311">
    <property type="component" value="Chromosome V"/>
</dbReference>
<dbReference type="RNAct" id="P40024">
    <property type="molecule type" value="protein"/>
</dbReference>
<dbReference type="GO" id="GO:0005737">
    <property type="term" value="C:cytoplasm"/>
    <property type="evidence" value="ECO:0007005"/>
    <property type="project" value="SGD"/>
</dbReference>
<dbReference type="GO" id="GO:0005634">
    <property type="term" value="C:nucleus"/>
    <property type="evidence" value="ECO:0000314"/>
    <property type="project" value="SGD"/>
</dbReference>
<dbReference type="GO" id="GO:0005524">
    <property type="term" value="F:ATP binding"/>
    <property type="evidence" value="ECO:0000318"/>
    <property type="project" value="GO_Central"/>
</dbReference>
<dbReference type="GO" id="GO:0016887">
    <property type="term" value="F:ATP hydrolysis activity"/>
    <property type="evidence" value="ECO:0000314"/>
    <property type="project" value="UniProtKB"/>
</dbReference>
<dbReference type="GO" id="GO:0006515">
    <property type="term" value="P:protein quality control for misfolded or incompletely synthesized proteins"/>
    <property type="evidence" value="ECO:0000314"/>
    <property type="project" value="UniProtKB"/>
</dbReference>
<dbReference type="GO" id="GO:0043335">
    <property type="term" value="P:protein unfolding"/>
    <property type="evidence" value="ECO:0000315"/>
    <property type="project" value="SGD"/>
</dbReference>
<dbReference type="GO" id="GO:0000056">
    <property type="term" value="P:ribosomal small subunit export from nucleus"/>
    <property type="evidence" value="ECO:0000315"/>
    <property type="project" value="SGD"/>
</dbReference>
<dbReference type="GO" id="GO:0042254">
    <property type="term" value="P:ribosome biogenesis"/>
    <property type="evidence" value="ECO:0000315"/>
    <property type="project" value="SGD"/>
</dbReference>
<dbReference type="CDD" id="cd03221">
    <property type="entry name" value="ABCF_EF-3"/>
    <property type="match status" value="2"/>
</dbReference>
<dbReference type="FunFam" id="3.40.50.300:FF:000549">
    <property type="entry name" value="ABC transporter ATP-binding protein arb1"/>
    <property type="match status" value="1"/>
</dbReference>
<dbReference type="FunFam" id="3.40.50.300:FF:000618">
    <property type="entry name" value="ATP-binding cassette (ABC) transporter, putative"/>
    <property type="match status" value="1"/>
</dbReference>
<dbReference type="Gene3D" id="3.40.50.300">
    <property type="entry name" value="P-loop containing nucleotide triphosphate hydrolases"/>
    <property type="match status" value="2"/>
</dbReference>
<dbReference type="InterPro" id="IPR003593">
    <property type="entry name" value="AAA+_ATPase"/>
</dbReference>
<dbReference type="InterPro" id="IPR032781">
    <property type="entry name" value="ABC_tran_Xtn"/>
</dbReference>
<dbReference type="InterPro" id="IPR003439">
    <property type="entry name" value="ABC_transporter-like_ATP-bd"/>
</dbReference>
<dbReference type="InterPro" id="IPR017871">
    <property type="entry name" value="ABC_transporter-like_CS"/>
</dbReference>
<dbReference type="InterPro" id="IPR050611">
    <property type="entry name" value="ABCF_EF3_subfamily"/>
</dbReference>
<dbReference type="InterPro" id="IPR027417">
    <property type="entry name" value="P-loop_NTPase"/>
</dbReference>
<dbReference type="PANTHER" id="PTHR19211:SF15">
    <property type="entry name" value="ATP-BINDING CASSETTE SUB-FAMILY F MEMBER 2"/>
    <property type="match status" value="1"/>
</dbReference>
<dbReference type="PANTHER" id="PTHR19211">
    <property type="entry name" value="ATP-BINDING TRANSPORT PROTEIN-RELATED"/>
    <property type="match status" value="1"/>
</dbReference>
<dbReference type="Pfam" id="PF00005">
    <property type="entry name" value="ABC_tran"/>
    <property type="match status" value="2"/>
</dbReference>
<dbReference type="Pfam" id="PF12848">
    <property type="entry name" value="ABC_tran_Xtn"/>
    <property type="match status" value="1"/>
</dbReference>
<dbReference type="SMART" id="SM00382">
    <property type="entry name" value="AAA"/>
    <property type="match status" value="2"/>
</dbReference>
<dbReference type="SUPFAM" id="SSF52540">
    <property type="entry name" value="P-loop containing nucleoside triphosphate hydrolases"/>
    <property type="match status" value="2"/>
</dbReference>
<dbReference type="PROSITE" id="PS00211">
    <property type="entry name" value="ABC_TRANSPORTER_1"/>
    <property type="match status" value="1"/>
</dbReference>
<dbReference type="PROSITE" id="PS50893">
    <property type="entry name" value="ABC_TRANSPORTER_2"/>
    <property type="match status" value="2"/>
</dbReference>
<proteinExistence type="evidence at protein level"/>